<feature type="chain" id="PRO_0000173626" description="Transaldolase">
    <location>
        <begin position="1"/>
        <end position="322"/>
    </location>
</feature>
<feature type="active site" description="Schiff-base intermediate with substrate" evidence="2">
    <location>
        <position position="136"/>
    </location>
</feature>
<gene>
    <name evidence="2" type="primary">tal</name>
    <name type="synonym">talB</name>
    <name type="ordered locus">XCC0830</name>
</gene>
<dbReference type="EC" id="2.2.1.2" evidence="2"/>
<dbReference type="EMBL" id="AE008922">
    <property type="protein sequence ID" value="AAM40145.1"/>
    <property type="molecule type" value="Genomic_DNA"/>
</dbReference>
<dbReference type="RefSeq" id="NP_636221.1">
    <property type="nucleotide sequence ID" value="NC_003902.1"/>
</dbReference>
<dbReference type="RefSeq" id="WP_011036066.1">
    <property type="nucleotide sequence ID" value="NC_003902.1"/>
</dbReference>
<dbReference type="SMR" id="Q8PCA4"/>
<dbReference type="STRING" id="190485.XCC0830"/>
<dbReference type="EnsemblBacteria" id="AAM40145">
    <property type="protein sequence ID" value="AAM40145"/>
    <property type="gene ID" value="XCC0830"/>
</dbReference>
<dbReference type="KEGG" id="xcc:XCC0830"/>
<dbReference type="PATRIC" id="fig|190485.4.peg.903"/>
<dbReference type="eggNOG" id="COG0176">
    <property type="taxonomic scope" value="Bacteria"/>
</dbReference>
<dbReference type="HOGENOM" id="CLU_047470_0_1_6"/>
<dbReference type="OrthoDB" id="9809101at2"/>
<dbReference type="UniPathway" id="UPA00115">
    <property type="reaction ID" value="UER00414"/>
</dbReference>
<dbReference type="Proteomes" id="UP000001010">
    <property type="component" value="Chromosome"/>
</dbReference>
<dbReference type="GO" id="GO:0005829">
    <property type="term" value="C:cytosol"/>
    <property type="evidence" value="ECO:0000318"/>
    <property type="project" value="GO_Central"/>
</dbReference>
<dbReference type="GO" id="GO:0004801">
    <property type="term" value="F:transaldolase activity"/>
    <property type="evidence" value="ECO:0000250"/>
    <property type="project" value="UniProtKB"/>
</dbReference>
<dbReference type="GO" id="GO:0005975">
    <property type="term" value="P:carbohydrate metabolic process"/>
    <property type="evidence" value="ECO:0007669"/>
    <property type="project" value="InterPro"/>
</dbReference>
<dbReference type="GO" id="GO:0009052">
    <property type="term" value="P:pentose-phosphate shunt, non-oxidative branch"/>
    <property type="evidence" value="ECO:0000318"/>
    <property type="project" value="GO_Central"/>
</dbReference>
<dbReference type="CDD" id="cd00957">
    <property type="entry name" value="Transaldolase_TalAB"/>
    <property type="match status" value="1"/>
</dbReference>
<dbReference type="Gene3D" id="3.20.20.70">
    <property type="entry name" value="Aldolase class I"/>
    <property type="match status" value="1"/>
</dbReference>
<dbReference type="HAMAP" id="MF_00492">
    <property type="entry name" value="Transaldolase_1"/>
    <property type="match status" value="1"/>
</dbReference>
<dbReference type="InterPro" id="IPR013785">
    <property type="entry name" value="Aldolase_TIM"/>
</dbReference>
<dbReference type="InterPro" id="IPR001585">
    <property type="entry name" value="TAL/FSA"/>
</dbReference>
<dbReference type="InterPro" id="IPR004730">
    <property type="entry name" value="Transaldolase_1"/>
</dbReference>
<dbReference type="InterPro" id="IPR018225">
    <property type="entry name" value="Transaldolase_AS"/>
</dbReference>
<dbReference type="PANTHER" id="PTHR10683">
    <property type="entry name" value="TRANSALDOLASE"/>
    <property type="match status" value="1"/>
</dbReference>
<dbReference type="PANTHER" id="PTHR10683:SF18">
    <property type="entry name" value="TRANSALDOLASE"/>
    <property type="match status" value="1"/>
</dbReference>
<dbReference type="Pfam" id="PF00923">
    <property type="entry name" value="TAL_FSA"/>
    <property type="match status" value="1"/>
</dbReference>
<dbReference type="SUPFAM" id="SSF51569">
    <property type="entry name" value="Aldolase"/>
    <property type="match status" value="1"/>
</dbReference>
<dbReference type="PROSITE" id="PS01054">
    <property type="entry name" value="TRANSALDOLASE_1"/>
    <property type="match status" value="1"/>
</dbReference>
<dbReference type="PROSITE" id="PS00958">
    <property type="entry name" value="TRANSALDOLASE_2"/>
    <property type="match status" value="1"/>
</dbReference>
<protein>
    <recommendedName>
        <fullName evidence="2">Transaldolase</fullName>
        <ecNumber evidence="2">2.2.1.2</ecNumber>
    </recommendedName>
</protein>
<reference key="1">
    <citation type="journal article" date="2002" name="Nature">
        <title>Comparison of the genomes of two Xanthomonas pathogens with differing host specificities.</title>
        <authorList>
            <person name="da Silva A.C.R."/>
            <person name="Ferro J.A."/>
            <person name="Reinach F.C."/>
            <person name="Farah C.S."/>
            <person name="Furlan L.R."/>
            <person name="Quaggio R.B."/>
            <person name="Monteiro-Vitorello C.B."/>
            <person name="Van Sluys M.A."/>
            <person name="Almeida N.F. Jr."/>
            <person name="Alves L.M.C."/>
            <person name="do Amaral A.M."/>
            <person name="Bertolini M.C."/>
            <person name="Camargo L.E.A."/>
            <person name="Camarotte G."/>
            <person name="Cannavan F."/>
            <person name="Cardozo J."/>
            <person name="Chambergo F."/>
            <person name="Ciapina L.P."/>
            <person name="Cicarelli R.M.B."/>
            <person name="Coutinho L.L."/>
            <person name="Cursino-Santos J.R."/>
            <person name="El-Dorry H."/>
            <person name="Faria J.B."/>
            <person name="Ferreira A.J.S."/>
            <person name="Ferreira R.C.C."/>
            <person name="Ferro M.I.T."/>
            <person name="Formighieri E.F."/>
            <person name="Franco M.C."/>
            <person name="Greggio C.C."/>
            <person name="Gruber A."/>
            <person name="Katsuyama A.M."/>
            <person name="Kishi L.T."/>
            <person name="Leite R.P."/>
            <person name="Lemos E.G.M."/>
            <person name="Lemos M.V.F."/>
            <person name="Locali E.C."/>
            <person name="Machado M.A."/>
            <person name="Madeira A.M.B.N."/>
            <person name="Martinez-Rossi N.M."/>
            <person name="Martins E.C."/>
            <person name="Meidanis J."/>
            <person name="Menck C.F.M."/>
            <person name="Miyaki C.Y."/>
            <person name="Moon D.H."/>
            <person name="Moreira L.M."/>
            <person name="Novo M.T.M."/>
            <person name="Okura V.K."/>
            <person name="Oliveira M.C."/>
            <person name="Oliveira V.R."/>
            <person name="Pereira H.A."/>
            <person name="Rossi A."/>
            <person name="Sena J.A.D."/>
            <person name="Silva C."/>
            <person name="de Souza R.F."/>
            <person name="Spinola L.A.F."/>
            <person name="Takita M.A."/>
            <person name="Tamura R.E."/>
            <person name="Teixeira E.C."/>
            <person name="Tezza R.I.D."/>
            <person name="Trindade dos Santos M."/>
            <person name="Truffi D."/>
            <person name="Tsai S.M."/>
            <person name="White F.F."/>
            <person name="Setubal J.C."/>
            <person name="Kitajima J.P."/>
        </authorList>
    </citation>
    <scope>NUCLEOTIDE SEQUENCE [LARGE SCALE GENOMIC DNA]</scope>
    <source>
        <strain>ATCC 33913 / DSM 3586 / NCPPB 528 / LMG 568 / P 25</strain>
    </source>
</reference>
<name>TAL_XANCP</name>
<organism>
    <name type="scientific">Xanthomonas campestris pv. campestris (strain ATCC 33913 / DSM 3586 / NCPPB 528 / LMG 568 / P 25)</name>
    <dbReference type="NCBI Taxonomy" id="190485"/>
    <lineage>
        <taxon>Bacteria</taxon>
        <taxon>Pseudomonadati</taxon>
        <taxon>Pseudomonadota</taxon>
        <taxon>Gammaproteobacteria</taxon>
        <taxon>Lysobacterales</taxon>
        <taxon>Lysobacteraceae</taxon>
        <taxon>Xanthomonas</taxon>
    </lineage>
</organism>
<proteinExistence type="inferred from homology"/>
<accession>Q8PCA4</accession>
<comment type="function">
    <text evidence="2">Transaldolase is important for the balance of metabolites in the pentose-phosphate pathway.</text>
</comment>
<comment type="catalytic activity">
    <reaction evidence="2">
        <text>D-sedoheptulose 7-phosphate + D-glyceraldehyde 3-phosphate = D-erythrose 4-phosphate + beta-D-fructose 6-phosphate</text>
        <dbReference type="Rhea" id="RHEA:17053"/>
        <dbReference type="ChEBI" id="CHEBI:16897"/>
        <dbReference type="ChEBI" id="CHEBI:57483"/>
        <dbReference type="ChEBI" id="CHEBI:57634"/>
        <dbReference type="ChEBI" id="CHEBI:59776"/>
        <dbReference type="EC" id="2.2.1.2"/>
    </reaction>
</comment>
<comment type="pathway">
    <text evidence="2">Carbohydrate degradation; pentose phosphate pathway; D-glyceraldehyde 3-phosphate and beta-D-fructose 6-phosphate from D-ribose 5-phosphate and D-xylulose 5-phosphate (non-oxidative stage): step 2/3.</text>
</comment>
<comment type="subunit">
    <text evidence="1">Homodimer.</text>
</comment>
<comment type="subcellular location">
    <subcellularLocation>
        <location evidence="2">Cytoplasm</location>
    </subcellularLocation>
</comment>
<comment type="similarity">
    <text evidence="2">Belongs to the transaldolase family. Type 1 subfamily.</text>
</comment>
<sequence length="322" mass="34594">MTASPSKLAQLRDLSVVVADTGDYDAIKRLKPVDCTTNPTLVKKALDLPVYADLIERELAWGRAHGGEDRNSTINEVADRLTVGVGTMLSELVPGRVSTEVDADLAHDTQATIAKARKFIAMYAERGVSKDKILIKIAATWEGIEAARQLQQEGIDCNLTLIFNRSQALACAEAGVFLISPFVGRILDFFVAKGQTPASIDEDPGVVFVRGVYDEFKRRGSSTVVMGASFRSTAQIEALAGCDRLTISPDLLEKLDADHGDLPRKLSPLNADNAAITPINSDSFATDLAADDMATEKLASGIDTFAKDLEALRKTIADKLAG</sequence>
<keyword id="KW-0963">Cytoplasm</keyword>
<keyword id="KW-0570">Pentose shunt</keyword>
<keyword id="KW-1185">Reference proteome</keyword>
<keyword id="KW-0704">Schiff base</keyword>
<keyword id="KW-0808">Transferase</keyword>
<evidence type="ECO:0000250" key="1"/>
<evidence type="ECO:0000255" key="2">
    <source>
        <dbReference type="HAMAP-Rule" id="MF_00492"/>
    </source>
</evidence>